<keyword id="KW-0025">Alternative splicing</keyword>
<keyword id="KW-1015">Disulfide bond</keyword>
<keyword id="KW-0245">EGF-like domain</keyword>
<keyword id="KW-0256">Endoplasmic reticulum</keyword>
<keyword id="KW-0967">Endosome</keyword>
<keyword id="KW-0325">Glycoprotein</keyword>
<keyword id="KW-0333">Golgi apparatus</keyword>
<keyword id="KW-0430">Lectin</keyword>
<keyword id="KW-1185">Reference proteome</keyword>
<keyword id="KW-0964">Secreted</keyword>
<keyword id="KW-0732">Signal</keyword>
<protein>
    <recommendedName>
        <fullName>C-type lectin domain family 18 member A</fullName>
    </recommendedName>
    <alternativeName>
        <fullName>Mannose receptor-like protein 2</fullName>
    </alternativeName>
</protein>
<gene>
    <name type="primary">CLEC18A</name>
    <name type="synonym">MRLP2</name>
</gene>
<feature type="signal peptide" evidence="2">
    <location>
        <begin position="1"/>
        <end position="26"/>
    </location>
</feature>
<feature type="chain" id="PRO_0000324316" description="C-type lectin domain family 18 member A">
    <location>
        <begin position="27"/>
        <end position="446"/>
    </location>
</feature>
<feature type="domain" description="SCP">
    <location>
        <begin position="52"/>
        <end position="182"/>
    </location>
</feature>
<feature type="domain" description="EGF-like" evidence="4">
    <location>
        <begin position="228"/>
        <end position="261"/>
    </location>
</feature>
<feature type="domain" description="C-type lectin" evidence="3">
    <location>
        <begin position="306"/>
        <end position="433"/>
    </location>
</feature>
<feature type="glycosylation site" description="N-linked (GlcNAc...) asparagine" evidence="2">
    <location>
        <position position="144"/>
    </location>
</feature>
<feature type="disulfide bond" evidence="1">
    <location>
        <begin position="236"/>
        <end position="249"/>
    </location>
</feature>
<feature type="disulfide bond" evidence="1">
    <location>
        <begin position="251"/>
        <end position="260"/>
    </location>
</feature>
<feature type="disulfide bond" evidence="1">
    <location>
        <begin position="327"/>
        <end position="432"/>
    </location>
</feature>
<feature type="disulfide bond" evidence="1">
    <location>
        <begin position="408"/>
        <end position="424"/>
    </location>
</feature>
<feature type="splice variant" id="VSP_032204" description="In isoform 2." evidence="9">
    <location>
        <begin position="1"/>
        <end position="340"/>
    </location>
</feature>
<feature type="splice variant" id="VSP_032205" description="In isoform 2." evidence="9">
    <original>KVQDILAFYLGRLETTNEVIDSDFETRNFWI</original>
    <variation>MGAASAGKRGQKGSWQQTPGSEWANLDYPGP</variation>
    <location>
        <begin position="341"/>
        <end position="371"/>
    </location>
</feature>
<feature type="sequence variant" id="VAR_059449" description="In allele CLEC18A-1; dbSNP:rs2549097." evidence="5 6 7 8">
    <original>V</original>
    <variation>A</variation>
    <location>
        <position position="118"/>
    </location>
</feature>
<feature type="sequence variant" id="VAR_074610" description="In allele CLEC18A-1; dbSNP:rs75776403." evidence="5 6 7">
    <original>T</original>
    <variation>M</variation>
    <location>
        <position position="151"/>
    </location>
</feature>
<feature type="sequence variant" id="VAR_074611" description="In allele CLEC18A-1; abolishes binding to polysaccharides." evidence="6 7">
    <original>S</original>
    <variation>R</variation>
    <location>
        <position position="339"/>
    </location>
</feature>
<feature type="mutagenesis site" description="Has a mild effect on polysaccharides binding." evidence="7">
    <original>D</original>
    <variation>N</variation>
    <location>
        <position position="421"/>
    </location>
</feature>
<feature type="sequence conflict" description="In Ref. 4; AAH78143." evidence="10" ref="4">
    <original>F</original>
    <variation>L</variation>
    <location>
        <position position="273"/>
    </location>
</feature>
<feature type="sequence conflict" description="In Ref. 4; AAH08616." evidence="10" ref="4">
    <original>DN</original>
    <variation>AT</variation>
    <location>
        <begin position="401"/>
        <end position="402"/>
    </location>
</feature>
<feature type="sequence conflict" description="In Ref. 4; AAH78143." evidence="10" ref="4">
    <original>D</original>
    <variation>N</variation>
    <location>
        <position position="421"/>
    </location>
</feature>
<dbReference type="EMBL" id="AF521893">
    <property type="protein sequence ID" value="AAP80866.1"/>
    <property type="molecule type" value="mRNA"/>
</dbReference>
<dbReference type="EMBL" id="AK289884">
    <property type="protein sequence ID" value="BAF82573.1"/>
    <property type="molecule type" value="mRNA"/>
</dbReference>
<dbReference type="EMBL" id="AC026468">
    <property type="status" value="NOT_ANNOTATED_CDS"/>
    <property type="molecule type" value="Genomic_DNA"/>
</dbReference>
<dbReference type="EMBL" id="BC008616">
    <property type="protein sequence ID" value="AAH08616.1"/>
    <property type="status" value="ALT_INIT"/>
    <property type="molecule type" value="mRNA"/>
</dbReference>
<dbReference type="EMBL" id="BC078143">
    <property type="protein sequence ID" value="AAH78143.1"/>
    <property type="molecule type" value="mRNA"/>
</dbReference>
<dbReference type="EMBL" id="BC141808">
    <property type="protein sequence ID" value="AAI41809.1"/>
    <property type="molecule type" value="mRNA"/>
</dbReference>
<dbReference type="CCDS" id="CCDS10886.1">
    <molecule id="A5D8T8-1"/>
</dbReference>
<dbReference type="RefSeq" id="NP_001129686.1">
    <molecule id="A5D8T8-1"/>
    <property type="nucleotide sequence ID" value="NM_001136214.4"/>
</dbReference>
<dbReference type="RefSeq" id="NP_001258126.1">
    <molecule id="A5D8T8-1"/>
    <property type="nucleotide sequence ID" value="NM_001271197.3"/>
</dbReference>
<dbReference type="RefSeq" id="NP_001357452.1">
    <molecule id="A5D8T8-1"/>
    <property type="nucleotide sequence ID" value="NM_001370523.4"/>
</dbReference>
<dbReference type="RefSeq" id="NP_872425.2">
    <molecule id="A5D8T8-1"/>
    <property type="nucleotide sequence ID" value="NM_182619.5"/>
</dbReference>
<dbReference type="RefSeq" id="XP_005255991.1">
    <property type="nucleotide sequence ID" value="XM_005255934.1"/>
</dbReference>
<dbReference type="RefSeq" id="XP_047290018.1">
    <molecule id="A5D8T8-1"/>
    <property type="nucleotide sequence ID" value="XM_047434062.1"/>
</dbReference>
<dbReference type="SMR" id="A5D8T8"/>
<dbReference type="BioGRID" id="131512">
    <property type="interactions" value="18"/>
</dbReference>
<dbReference type="FunCoup" id="A5D8T8">
    <property type="interactions" value="22"/>
</dbReference>
<dbReference type="IntAct" id="A5D8T8">
    <property type="interactions" value="13"/>
</dbReference>
<dbReference type="STRING" id="9606.ENSP00000484176"/>
<dbReference type="GlyCosmos" id="A5D8T8">
    <property type="glycosylation" value="2 sites, 1 glycan"/>
</dbReference>
<dbReference type="GlyGen" id="A5D8T8">
    <property type="glycosylation" value="3 sites, 1 O-linked glycan (1 site)"/>
</dbReference>
<dbReference type="iPTMnet" id="A5D8T8"/>
<dbReference type="PhosphoSitePlus" id="A5D8T8"/>
<dbReference type="BioMuta" id="CLEC18A"/>
<dbReference type="MassIVE" id="A5D8T8"/>
<dbReference type="PaxDb" id="9606-ENSP00000484176"/>
<dbReference type="PeptideAtlas" id="A5D8T8"/>
<dbReference type="Antibodypedia" id="44487">
    <property type="antibodies" value="127 antibodies from 18 providers"/>
</dbReference>
<dbReference type="DNASU" id="348174"/>
<dbReference type="Ensembl" id="ENST00000288040.11">
    <molecule id="A5D8T8-1"/>
    <property type="protein sequence ID" value="ENSP00000288040.6"/>
    <property type="gene ID" value="ENSG00000157322.18"/>
</dbReference>
<dbReference type="Ensembl" id="ENST00000393701.6">
    <molecule id="A5D8T8-1"/>
    <property type="protein sequence ID" value="ENSP00000377304.2"/>
    <property type="gene ID" value="ENSG00000157322.18"/>
</dbReference>
<dbReference type="Ensembl" id="ENST00000568461.5">
    <molecule id="A5D8T8-1"/>
    <property type="protein sequence ID" value="ENSP00000454685.1"/>
    <property type="gene ID" value="ENSG00000157322.18"/>
</dbReference>
<dbReference type="Ensembl" id="ENST00000615430.4">
    <molecule id="A5D8T8-1"/>
    <property type="protein sequence ID" value="ENSP00000484176.1"/>
    <property type="gene ID" value="ENSG00000157322.18"/>
</dbReference>
<dbReference type="GeneID" id="348174"/>
<dbReference type="KEGG" id="hsa:348174"/>
<dbReference type="MANE-Select" id="ENST00000288040.11">
    <property type="protein sequence ID" value="ENSP00000288040.6"/>
    <property type="RefSeq nucleotide sequence ID" value="NM_001370523.4"/>
    <property type="RefSeq protein sequence ID" value="NP_001357452.1"/>
</dbReference>
<dbReference type="UCSC" id="uc002exz.5">
    <molecule id="A5D8T8-1"/>
    <property type="organism name" value="human"/>
</dbReference>
<dbReference type="AGR" id="HGNC:30388"/>
<dbReference type="CTD" id="348174"/>
<dbReference type="DisGeNET" id="348174"/>
<dbReference type="GeneCards" id="CLEC18A"/>
<dbReference type="HGNC" id="HGNC:30388">
    <property type="gene designation" value="CLEC18A"/>
</dbReference>
<dbReference type="HPA" id="ENSG00000157322">
    <property type="expression patterns" value="Group enriched (choroid plexus, kidney)"/>
</dbReference>
<dbReference type="MIM" id="616571">
    <property type="type" value="gene"/>
</dbReference>
<dbReference type="neXtProt" id="NX_A5D8T8"/>
<dbReference type="PharmGKB" id="PA164717976"/>
<dbReference type="VEuPathDB" id="HostDB:ENSG00000157322"/>
<dbReference type="eggNOG" id="KOG3017">
    <property type="taxonomic scope" value="Eukaryota"/>
</dbReference>
<dbReference type="eggNOG" id="KOG4297">
    <property type="taxonomic scope" value="Eukaryota"/>
</dbReference>
<dbReference type="GeneTree" id="ENSGT00900000141128"/>
<dbReference type="InParanoid" id="A5D8T8"/>
<dbReference type="OMA" id="PLHTCIP"/>
<dbReference type="OrthoDB" id="337038at2759"/>
<dbReference type="PAN-GO" id="A5D8T8">
    <property type="GO annotations" value="2 GO annotations based on evolutionary models"/>
</dbReference>
<dbReference type="PhylomeDB" id="A5D8T8"/>
<dbReference type="TreeFam" id="TF350472"/>
<dbReference type="PathwayCommons" id="A5D8T8"/>
<dbReference type="SignaLink" id="A5D8T8"/>
<dbReference type="BioGRID-ORCS" id="348174">
    <property type="hits" value="13 hits in 998 CRISPR screens"/>
</dbReference>
<dbReference type="GenomeRNAi" id="348174"/>
<dbReference type="Pharos" id="A5D8T8">
    <property type="development level" value="Tbio"/>
</dbReference>
<dbReference type="PRO" id="PR:A5D8T8"/>
<dbReference type="Proteomes" id="UP000005640">
    <property type="component" value="Chromosome 16"/>
</dbReference>
<dbReference type="RNAct" id="A5D8T8">
    <property type="molecule type" value="protein"/>
</dbReference>
<dbReference type="Bgee" id="ENSG00000157322">
    <property type="expression patterns" value="Expressed in adult mammalian kidney and 90 other cell types or tissues"/>
</dbReference>
<dbReference type="ExpressionAtlas" id="A5D8T8">
    <property type="expression patterns" value="baseline and differential"/>
</dbReference>
<dbReference type="GO" id="GO:0005783">
    <property type="term" value="C:endoplasmic reticulum"/>
    <property type="evidence" value="ECO:0000304"/>
    <property type="project" value="UniProtKB"/>
</dbReference>
<dbReference type="GO" id="GO:0005768">
    <property type="term" value="C:endosome"/>
    <property type="evidence" value="ECO:0000304"/>
    <property type="project" value="UniProtKB"/>
</dbReference>
<dbReference type="GO" id="GO:0005615">
    <property type="term" value="C:extracellular space"/>
    <property type="evidence" value="ECO:0000314"/>
    <property type="project" value="UniProtKB"/>
</dbReference>
<dbReference type="GO" id="GO:0005794">
    <property type="term" value="C:Golgi apparatus"/>
    <property type="evidence" value="ECO:0000304"/>
    <property type="project" value="UniProtKB"/>
</dbReference>
<dbReference type="GO" id="GO:0030247">
    <property type="term" value="F:polysaccharide binding"/>
    <property type="evidence" value="ECO:0000314"/>
    <property type="project" value="UniProtKB"/>
</dbReference>
<dbReference type="CDD" id="cd05380">
    <property type="entry name" value="CAP_euk"/>
    <property type="match status" value="1"/>
</dbReference>
<dbReference type="CDD" id="cd00037">
    <property type="entry name" value="CLECT"/>
    <property type="match status" value="1"/>
</dbReference>
<dbReference type="CDD" id="cd00054">
    <property type="entry name" value="EGF_CA"/>
    <property type="match status" value="1"/>
</dbReference>
<dbReference type="FunFam" id="3.40.33.10:FF:000014">
    <property type="entry name" value="C-type lectin domain family 18 member A"/>
    <property type="match status" value="1"/>
</dbReference>
<dbReference type="FunFam" id="3.10.100.10:FF:000037">
    <property type="entry name" value="C-type lectin domain family 18 member A-like"/>
    <property type="match status" value="1"/>
</dbReference>
<dbReference type="Gene3D" id="3.40.33.10">
    <property type="entry name" value="CAP"/>
    <property type="match status" value="1"/>
</dbReference>
<dbReference type="Gene3D" id="2.10.25.10">
    <property type="entry name" value="Laminin"/>
    <property type="match status" value="1"/>
</dbReference>
<dbReference type="Gene3D" id="3.10.100.10">
    <property type="entry name" value="Mannose-Binding Protein A, subunit A"/>
    <property type="match status" value="1"/>
</dbReference>
<dbReference type="InterPro" id="IPR001304">
    <property type="entry name" value="C-type_lectin-like"/>
</dbReference>
<dbReference type="InterPro" id="IPR016186">
    <property type="entry name" value="C-type_lectin-like/link_sf"/>
</dbReference>
<dbReference type="InterPro" id="IPR018378">
    <property type="entry name" value="C-type_lectin_CS"/>
</dbReference>
<dbReference type="InterPro" id="IPR014044">
    <property type="entry name" value="CAP_dom"/>
</dbReference>
<dbReference type="InterPro" id="IPR035940">
    <property type="entry name" value="CAP_sf"/>
</dbReference>
<dbReference type="InterPro" id="IPR001283">
    <property type="entry name" value="CRISP-related"/>
</dbReference>
<dbReference type="InterPro" id="IPR016187">
    <property type="entry name" value="CTDL_fold"/>
</dbReference>
<dbReference type="InterPro" id="IPR000742">
    <property type="entry name" value="EGF-like_dom"/>
</dbReference>
<dbReference type="PANTHER" id="PTHR10334">
    <property type="entry name" value="CYSTEINE-RICH SECRETORY PROTEIN-RELATED"/>
    <property type="match status" value="1"/>
</dbReference>
<dbReference type="Pfam" id="PF00188">
    <property type="entry name" value="CAP"/>
    <property type="match status" value="1"/>
</dbReference>
<dbReference type="Pfam" id="PF00059">
    <property type="entry name" value="Lectin_C"/>
    <property type="match status" value="1"/>
</dbReference>
<dbReference type="PRINTS" id="PR00837">
    <property type="entry name" value="V5TPXLIKE"/>
</dbReference>
<dbReference type="SMART" id="SM00034">
    <property type="entry name" value="CLECT"/>
    <property type="match status" value="1"/>
</dbReference>
<dbReference type="SMART" id="SM00181">
    <property type="entry name" value="EGF"/>
    <property type="match status" value="2"/>
</dbReference>
<dbReference type="SMART" id="SM00198">
    <property type="entry name" value="SCP"/>
    <property type="match status" value="1"/>
</dbReference>
<dbReference type="SUPFAM" id="SSF56436">
    <property type="entry name" value="C-type lectin-like"/>
    <property type="match status" value="1"/>
</dbReference>
<dbReference type="SUPFAM" id="SSF55797">
    <property type="entry name" value="PR-1-like"/>
    <property type="match status" value="1"/>
</dbReference>
<dbReference type="PROSITE" id="PS00615">
    <property type="entry name" value="C_TYPE_LECTIN_1"/>
    <property type="match status" value="1"/>
</dbReference>
<dbReference type="PROSITE" id="PS50041">
    <property type="entry name" value="C_TYPE_LECTIN_2"/>
    <property type="match status" value="1"/>
</dbReference>
<dbReference type="PROSITE" id="PS00022">
    <property type="entry name" value="EGF_1"/>
    <property type="match status" value="2"/>
</dbReference>
<dbReference type="PROSITE" id="PS01186">
    <property type="entry name" value="EGF_2"/>
    <property type="match status" value="2"/>
</dbReference>
<dbReference type="PROSITE" id="PS50026">
    <property type="entry name" value="EGF_3"/>
    <property type="match status" value="1"/>
</dbReference>
<evidence type="ECO:0000250" key="1"/>
<evidence type="ECO:0000255" key="2"/>
<evidence type="ECO:0000255" key="3">
    <source>
        <dbReference type="PROSITE-ProRule" id="PRU00040"/>
    </source>
</evidence>
<evidence type="ECO:0000255" key="4">
    <source>
        <dbReference type="PROSITE-ProRule" id="PRU00076"/>
    </source>
</evidence>
<evidence type="ECO:0000269" key="5">
    <source>
    </source>
</evidence>
<evidence type="ECO:0000269" key="6">
    <source>
    </source>
</evidence>
<evidence type="ECO:0000269" key="7">
    <source>
    </source>
</evidence>
<evidence type="ECO:0000269" key="8">
    <source ref="1"/>
</evidence>
<evidence type="ECO:0000303" key="9">
    <source>
    </source>
</evidence>
<evidence type="ECO:0000305" key="10"/>
<evidence type="ECO:0000305" key="11">
    <source>
    </source>
</evidence>
<organism>
    <name type="scientific">Homo sapiens</name>
    <name type="common">Human</name>
    <dbReference type="NCBI Taxonomy" id="9606"/>
    <lineage>
        <taxon>Eukaryota</taxon>
        <taxon>Metazoa</taxon>
        <taxon>Chordata</taxon>
        <taxon>Craniata</taxon>
        <taxon>Vertebrata</taxon>
        <taxon>Euteleostomi</taxon>
        <taxon>Mammalia</taxon>
        <taxon>Eutheria</taxon>
        <taxon>Euarchontoglires</taxon>
        <taxon>Primates</taxon>
        <taxon>Haplorrhini</taxon>
        <taxon>Catarrhini</taxon>
        <taxon>Hominidae</taxon>
        <taxon>Homo</taxon>
    </lineage>
</organism>
<comment type="function">
    <text evidence="7">Binds polysaccharides in a Ca(2+)-independent manner with a preferentially binding to fucoidan, beta-glucans and galactans (PubMed:26170455).</text>
</comment>
<comment type="interaction">
    <interactant intactId="EBI-10173491">
        <id>A5D8T8</id>
    </interactant>
    <interactant intactId="EBI-10173507">
        <id>Q6UY14-3</id>
        <label>ADAMTSL4</label>
    </interactant>
    <organismsDiffer>false</organismsDiffer>
    <experiments>3</experiments>
</comment>
<comment type="interaction">
    <interactant intactId="EBI-10173491">
        <id>A5D8T8</id>
    </interactant>
    <interactant intactId="EBI-3867333">
        <id>A8MQ03</id>
        <label>CYSRT1</label>
    </interactant>
    <organismsDiffer>false</organismsDiffer>
    <experiments>3</experiments>
</comment>
<comment type="interaction">
    <interactant intactId="EBI-10173491">
        <id>A5D8T8</id>
    </interactant>
    <interactant intactId="EBI-948001">
        <id>Q15323</id>
        <label>KRT31</label>
    </interactant>
    <organismsDiffer>false</organismsDiffer>
    <experiments>3</experiments>
</comment>
<comment type="interaction">
    <interactant intactId="EBI-10173491">
        <id>A5D8T8</id>
    </interactant>
    <interactant intactId="EBI-1047093">
        <id>O76011</id>
        <label>KRT34</label>
    </interactant>
    <organismsDiffer>false</organismsDiffer>
    <experiments>3</experiments>
</comment>
<comment type="interaction">
    <interactant intactId="EBI-10173491">
        <id>A5D8T8</id>
    </interactant>
    <interactant intactId="EBI-10171697">
        <id>Q6A162</id>
        <label>KRT40</label>
    </interactant>
    <organismsDiffer>false</organismsDiffer>
    <experiments>3</experiments>
</comment>
<comment type="interaction">
    <interactant intactId="EBI-10173491">
        <id>A5D8T8</id>
    </interactant>
    <interactant intactId="EBI-945833">
        <id>Q7Z3S9</id>
        <label>NOTCH2NLA</label>
    </interactant>
    <organismsDiffer>false</organismsDiffer>
    <experiments>3</experiments>
</comment>
<comment type="subcellular location">
    <subcellularLocation>
        <location evidence="7">Secreted</location>
    </subcellularLocation>
    <subcellularLocation>
        <location evidence="11">Endoplasmic reticulum</location>
    </subcellularLocation>
    <subcellularLocation>
        <location evidence="11">Golgi apparatus</location>
    </subcellularLocation>
    <subcellularLocation>
        <location evidence="11">Endosome</location>
    </subcellularLocation>
</comment>
<comment type="alternative products">
    <event type="alternative splicing"/>
    <isoform>
        <id>A5D8T8-1</id>
        <name>1</name>
        <sequence type="displayed"/>
    </isoform>
    <isoform>
        <id>A5D8T8-2</id>
        <name>2</name>
        <sequence type="described" ref="VSP_032204 VSP_032205"/>
    </isoform>
</comment>
<comment type="tissue specificity">
    <text evidence="7">Dectected in all cell lines tested and in peripheral blood cells.</text>
</comment>
<comment type="PTM">
    <text evidence="7">N-glycosylated.</text>
</comment>
<comment type="sequence caution" evidence="10">
    <conflict type="erroneous initiation">
        <sequence resource="EMBL-CDS" id="AAH08616"/>
    </conflict>
</comment>
<sequence>MLHPETSPGRGHLLAVLLALLGTAWAEVWPPQLQEQAPMAGALNRKESFLLLSLHNRLRSWVQPPAADMRRLDWSDSLAQLAQARAALCGTPTPSLASGLWRTLQVGWNMQLLPAGLVSFVEVVSLWFAEGQRYSHAAGECARNATCTHYTQLVWATSSQLGCGRHLCSAGQAAIEAFVCAYSPRGNWEVNGKTIVPYKKGAWCSLCTASVSGCFKAWDHAGGLCEVPRNPCRMSCQNHGRLNISTCHCHCPPGYTGRYCQVRCSLQCVHGRFREEECSCVCDIGYGGAQCATKVHFPFHTCDLRIDGDCFMVSSEADTYYRARMKCQRKGGVLAQIKSQKVQDILAFYLGRLETTNEVIDSDFETRNFWIGLTYKTAKDSFRWATGEHQAFTSFAFGQPDNHGFGNCVELQASAAFNWNDQRCKTRNRYICQFAQEHISRWGPGS</sequence>
<accession>A5D8T8</accession>
<accession>A8K1G9</accession>
<accession>Q6DCB3</accession>
<accession>Q7Z5K9</accession>
<accession>Q96HH2</accession>
<reference key="1">
    <citation type="submission" date="2002-06" db="EMBL/GenBank/DDBJ databases">
        <authorList>
            <person name="Ding P."/>
            <person name="Han W."/>
            <person name="Rui M."/>
            <person name="Wang Y."/>
            <person name="Zhang Y."/>
            <person name="Song Q."/>
            <person name="Ma D."/>
        </authorList>
    </citation>
    <scope>NUCLEOTIDE SEQUENCE [MRNA] (ISOFORM 1)</scope>
    <scope>VARIANT ALA-118</scope>
</reference>
<reference key="2">
    <citation type="journal article" date="2004" name="Nat. Genet.">
        <title>Complete sequencing and characterization of 21,243 full-length human cDNAs.</title>
        <authorList>
            <person name="Ota T."/>
            <person name="Suzuki Y."/>
            <person name="Nishikawa T."/>
            <person name="Otsuki T."/>
            <person name="Sugiyama T."/>
            <person name="Irie R."/>
            <person name="Wakamatsu A."/>
            <person name="Hayashi K."/>
            <person name="Sato H."/>
            <person name="Nagai K."/>
            <person name="Kimura K."/>
            <person name="Makita H."/>
            <person name="Sekine M."/>
            <person name="Obayashi M."/>
            <person name="Nishi T."/>
            <person name="Shibahara T."/>
            <person name="Tanaka T."/>
            <person name="Ishii S."/>
            <person name="Yamamoto J."/>
            <person name="Saito K."/>
            <person name="Kawai Y."/>
            <person name="Isono Y."/>
            <person name="Nakamura Y."/>
            <person name="Nagahari K."/>
            <person name="Murakami K."/>
            <person name="Yasuda T."/>
            <person name="Iwayanagi T."/>
            <person name="Wagatsuma M."/>
            <person name="Shiratori A."/>
            <person name="Sudo H."/>
            <person name="Hosoiri T."/>
            <person name="Kaku Y."/>
            <person name="Kodaira H."/>
            <person name="Kondo H."/>
            <person name="Sugawara M."/>
            <person name="Takahashi M."/>
            <person name="Kanda K."/>
            <person name="Yokoi T."/>
            <person name="Furuya T."/>
            <person name="Kikkawa E."/>
            <person name="Omura Y."/>
            <person name="Abe K."/>
            <person name="Kamihara K."/>
            <person name="Katsuta N."/>
            <person name="Sato K."/>
            <person name="Tanikawa M."/>
            <person name="Yamazaki M."/>
            <person name="Ninomiya K."/>
            <person name="Ishibashi T."/>
            <person name="Yamashita H."/>
            <person name="Murakawa K."/>
            <person name="Fujimori K."/>
            <person name="Tanai H."/>
            <person name="Kimata M."/>
            <person name="Watanabe M."/>
            <person name="Hiraoka S."/>
            <person name="Chiba Y."/>
            <person name="Ishida S."/>
            <person name="Ono Y."/>
            <person name="Takiguchi S."/>
            <person name="Watanabe S."/>
            <person name="Yosida M."/>
            <person name="Hotuta T."/>
            <person name="Kusano J."/>
            <person name="Kanehori K."/>
            <person name="Takahashi-Fujii A."/>
            <person name="Hara H."/>
            <person name="Tanase T.-O."/>
            <person name="Nomura Y."/>
            <person name="Togiya S."/>
            <person name="Komai F."/>
            <person name="Hara R."/>
            <person name="Takeuchi K."/>
            <person name="Arita M."/>
            <person name="Imose N."/>
            <person name="Musashino K."/>
            <person name="Yuuki H."/>
            <person name="Oshima A."/>
            <person name="Sasaki N."/>
            <person name="Aotsuka S."/>
            <person name="Yoshikawa Y."/>
            <person name="Matsunawa H."/>
            <person name="Ichihara T."/>
            <person name="Shiohata N."/>
            <person name="Sano S."/>
            <person name="Moriya S."/>
            <person name="Momiyama H."/>
            <person name="Satoh N."/>
            <person name="Takami S."/>
            <person name="Terashima Y."/>
            <person name="Suzuki O."/>
            <person name="Nakagawa S."/>
            <person name="Senoh A."/>
            <person name="Mizoguchi H."/>
            <person name="Goto Y."/>
            <person name="Shimizu F."/>
            <person name="Wakebe H."/>
            <person name="Hishigaki H."/>
            <person name="Watanabe T."/>
            <person name="Sugiyama A."/>
            <person name="Takemoto M."/>
            <person name="Kawakami B."/>
            <person name="Yamazaki M."/>
            <person name="Watanabe K."/>
            <person name="Kumagai A."/>
            <person name="Itakura S."/>
            <person name="Fukuzumi Y."/>
            <person name="Fujimori Y."/>
            <person name="Komiyama M."/>
            <person name="Tashiro H."/>
            <person name="Tanigami A."/>
            <person name="Fujiwara T."/>
            <person name="Ono T."/>
            <person name="Yamada K."/>
            <person name="Fujii Y."/>
            <person name="Ozaki K."/>
            <person name="Hirao M."/>
            <person name="Ohmori Y."/>
            <person name="Kawabata A."/>
            <person name="Hikiji T."/>
            <person name="Kobatake N."/>
            <person name="Inagaki H."/>
            <person name="Ikema Y."/>
            <person name="Okamoto S."/>
            <person name="Okitani R."/>
            <person name="Kawakami T."/>
            <person name="Noguchi S."/>
            <person name="Itoh T."/>
            <person name="Shigeta K."/>
            <person name="Senba T."/>
            <person name="Matsumura K."/>
            <person name="Nakajima Y."/>
            <person name="Mizuno T."/>
            <person name="Morinaga M."/>
            <person name="Sasaki M."/>
            <person name="Togashi T."/>
            <person name="Oyama M."/>
            <person name="Hata H."/>
            <person name="Watanabe M."/>
            <person name="Komatsu T."/>
            <person name="Mizushima-Sugano J."/>
            <person name="Satoh T."/>
            <person name="Shirai Y."/>
            <person name="Takahashi Y."/>
            <person name="Nakagawa K."/>
            <person name="Okumura K."/>
            <person name="Nagase T."/>
            <person name="Nomura N."/>
            <person name="Kikuchi H."/>
            <person name="Masuho Y."/>
            <person name="Yamashita R."/>
            <person name="Nakai K."/>
            <person name="Yada T."/>
            <person name="Nakamura Y."/>
            <person name="Ohara O."/>
            <person name="Isogai T."/>
            <person name="Sugano S."/>
        </authorList>
    </citation>
    <scope>NUCLEOTIDE SEQUENCE [LARGE SCALE MRNA] (ISOFORM 1)</scope>
    <scope>VARIANT ALA-118</scope>
    <source>
        <tissue>Caudate nucleus</tissue>
    </source>
</reference>
<reference key="3">
    <citation type="journal article" date="2004" name="Nature">
        <title>The sequence and analysis of duplication-rich human chromosome 16.</title>
        <authorList>
            <person name="Martin J."/>
            <person name="Han C."/>
            <person name="Gordon L.A."/>
            <person name="Terry A."/>
            <person name="Prabhakar S."/>
            <person name="She X."/>
            <person name="Xie G."/>
            <person name="Hellsten U."/>
            <person name="Chan Y.M."/>
            <person name="Altherr M."/>
            <person name="Couronne O."/>
            <person name="Aerts A."/>
            <person name="Bajorek E."/>
            <person name="Black S."/>
            <person name="Blumer H."/>
            <person name="Branscomb E."/>
            <person name="Brown N.C."/>
            <person name="Bruno W.J."/>
            <person name="Buckingham J.M."/>
            <person name="Callen D.F."/>
            <person name="Campbell C.S."/>
            <person name="Campbell M.L."/>
            <person name="Campbell E.W."/>
            <person name="Caoile C."/>
            <person name="Challacombe J.F."/>
            <person name="Chasteen L.A."/>
            <person name="Chertkov O."/>
            <person name="Chi H.C."/>
            <person name="Christensen M."/>
            <person name="Clark L.M."/>
            <person name="Cohn J.D."/>
            <person name="Denys M."/>
            <person name="Detter J.C."/>
            <person name="Dickson M."/>
            <person name="Dimitrijevic-Bussod M."/>
            <person name="Escobar J."/>
            <person name="Fawcett J.J."/>
            <person name="Flowers D."/>
            <person name="Fotopulos D."/>
            <person name="Glavina T."/>
            <person name="Gomez M."/>
            <person name="Gonzales E."/>
            <person name="Goodstein D."/>
            <person name="Goodwin L.A."/>
            <person name="Grady D.L."/>
            <person name="Grigoriev I."/>
            <person name="Groza M."/>
            <person name="Hammon N."/>
            <person name="Hawkins T."/>
            <person name="Haydu L."/>
            <person name="Hildebrand C.E."/>
            <person name="Huang W."/>
            <person name="Israni S."/>
            <person name="Jett J."/>
            <person name="Jewett P.B."/>
            <person name="Kadner K."/>
            <person name="Kimball H."/>
            <person name="Kobayashi A."/>
            <person name="Krawczyk M.-C."/>
            <person name="Leyba T."/>
            <person name="Longmire J.L."/>
            <person name="Lopez F."/>
            <person name="Lou Y."/>
            <person name="Lowry S."/>
            <person name="Ludeman T."/>
            <person name="Manohar C.F."/>
            <person name="Mark G.A."/>
            <person name="McMurray K.L."/>
            <person name="Meincke L.J."/>
            <person name="Morgan J."/>
            <person name="Moyzis R.K."/>
            <person name="Mundt M.O."/>
            <person name="Munk A.C."/>
            <person name="Nandkeshwar R.D."/>
            <person name="Pitluck S."/>
            <person name="Pollard M."/>
            <person name="Predki P."/>
            <person name="Parson-Quintana B."/>
            <person name="Ramirez L."/>
            <person name="Rash S."/>
            <person name="Retterer J."/>
            <person name="Ricke D.O."/>
            <person name="Robinson D.L."/>
            <person name="Rodriguez A."/>
            <person name="Salamov A."/>
            <person name="Saunders E.H."/>
            <person name="Scott D."/>
            <person name="Shough T."/>
            <person name="Stallings R.L."/>
            <person name="Stalvey M."/>
            <person name="Sutherland R.D."/>
            <person name="Tapia R."/>
            <person name="Tesmer J.G."/>
            <person name="Thayer N."/>
            <person name="Thompson L.S."/>
            <person name="Tice H."/>
            <person name="Torney D.C."/>
            <person name="Tran-Gyamfi M."/>
            <person name="Tsai M."/>
            <person name="Ulanovsky L.E."/>
            <person name="Ustaszewska A."/>
            <person name="Vo N."/>
            <person name="White P.S."/>
            <person name="Williams A.L."/>
            <person name="Wills P.L."/>
            <person name="Wu J.-R."/>
            <person name="Wu K."/>
            <person name="Yang J."/>
            <person name="DeJong P."/>
            <person name="Bruce D."/>
            <person name="Doggett N.A."/>
            <person name="Deaven L."/>
            <person name="Schmutz J."/>
            <person name="Grimwood J."/>
            <person name="Richardson P."/>
            <person name="Rokhsar D.S."/>
            <person name="Eichler E.E."/>
            <person name="Gilna P."/>
            <person name="Lucas S.M."/>
            <person name="Myers R.M."/>
            <person name="Rubin E.M."/>
            <person name="Pennacchio L.A."/>
        </authorList>
    </citation>
    <scope>NUCLEOTIDE SEQUENCE [LARGE SCALE GENOMIC DNA]</scope>
</reference>
<reference key="4">
    <citation type="journal article" date="2004" name="Genome Res.">
        <title>The status, quality, and expansion of the NIH full-length cDNA project: the Mammalian Gene Collection (MGC).</title>
        <authorList>
            <consortium name="The MGC Project Team"/>
        </authorList>
    </citation>
    <scope>NUCLEOTIDE SEQUENCE [LARGE SCALE MRNA] (ISOFORMS 1 AND 2)</scope>
    <scope>VARIANTS ALA-118; MET-151 AND ARG-339</scope>
    <source>
        <tissue>Brain</tissue>
        <tissue>Colon</tissue>
    </source>
</reference>
<reference key="5">
    <citation type="journal article" date="2015" name="J. Biol. Chem.">
        <title>Human CLEC18 gene cluster contains C-type lectins with differential glycan-binding specificity.</title>
        <authorList>
            <person name="Huang Y.L."/>
            <person name="Pai F.S."/>
            <person name="Tsou Y.T."/>
            <person name="Mon H.C."/>
            <person name="Hsu T.L."/>
            <person name="Wu C.Y."/>
            <person name="Chou T.Y."/>
            <person name="Yang W.B."/>
            <person name="Chen C.H."/>
            <person name="Wong C.H."/>
            <person name="Hsieh S.L."/>
        </authorList>
    </citation>
    <scope>FUNCTION</scope>
    <scope>SUBCELLULAR LOCATION</scope>
    <scope>TISSUE SPECIFICITY</scope>
    <scope>VARIANTS ALA-118; MET-151 AND ARG-339</scope>
    <scope>GLYCOSYLATION</scope>
    <scope>MUTAGENESIS OF ASP-421</scope>
    <scope>CHARACTERIZATION OF VARIANT ARG-339</scope>
</reference>
<proteinExistence type="evidence at protein level"/>
<name>CL18A_HUMAN</name>